<accession>Q2JKT8</accession>
<sequence length="352" mass="39550">MTIAVGRVRQERGWFDIVDDWLKRDRFVFIGWSGLLLFPCAYLALGGWLTGTTFVTSWYTHGLASSYLEGCNFLTVAVSTPADSMGHSLLLLWGPEAQGDFTRWCQIGGLWTFVALHGALGLIGFMLRQFEIARLVGVRPYNAIAFSAPIAVFVSVFLIYPLGQSSWFFAPSFGVAGIFRFLLFFQGFHNWTLNPFHMMGVAGVLGGALLCAIHGATVENTLFQDGEAASTFRAFEPTQSEETYSMVTANRYWSQIFGIAFSNKRWLHFFMLFVPVTGLWMSSIGVVGLALNLRAYDFISQEVRAAEDPEFETFYTKNILLNEGIRAWMAPQDQPHERFEFPEEVLPRGNAL</sequence>
<name>PSBD_SYNJB</name>
<proteinExistence type="inferred from homology"/>
<gene>
    <name evidence="1" type="primary">psbD1</name>
    <name type="ordered locus">CYB_0854</name>
</gene>
<gene>
    <name evidence="1" type="primary">psbD2</name>
    <name type="ordered locus">CYB_1736</name>
</gene>
<reference key="1">
    <citation type="journal article" date="2007" name="ISME J.">
        <title>Population level functional diversity in a microbial community revealed by comparative genomic and metagenomic analyses.</title>
        <authorList>
            <person name="Bhaya D."/>
            <person name="Grossman A.R."/>
            <person name="Steunou A.-S."/>
            <person name="Khuri N."/>
            <person name="Cohan F.M."/>
            <person name="Hamamura N."/>
            <person name="Melendrez M.C."/>
            <person name="Bateson M.M."/>
            <person name="Ward D.M."/>
            <person name="Heidelberg J.F."/>
        </authorList>
    </citation>
    <scope>NUCLEOTIDE SEQUENCE [LARGE SCALE GENOMIC DNA]</scope>
    <source>
        <strain>JA-2-3B'a(2-13)</strain>
    </source>
</reference>
<organism>
    <name type="scientific">Synechococcus sp. (strain JA-2-3B'a(2-13))</name>
    <name type="common">Cyanobacteria bacterium Yellowstone B-Prime</name>
    <dbReference type="NCBI Taxonomy" id="321332"/>
    <lineage>
        <taxon>Bacteria</taxon>
        <taxon>Bacillati</taxon>
        <taxon>Cyanobacteriota</taxon>
        <taxon>Cyanophyceae</taxon>
        <taxon>Synechococcales</taxon>
        <taxon>Synechococcaceae</taxon>
        <taxon>Synechococcus</taxon>
    </lineage>
</organism>
<feature type="chain" id="PRO_0000359609" description="Photosystem II D2 protein">
    <location>
        <begin position="1"/>
        <end position="352"/>
    </location>
</feature>
<feature type="transmembrane region" description="Helical" evidence="1">
    <location>
        <begin position="40"/>
        <end position="60"/>
    </location>
</feature>
<feature type="transmembrane region" description="Helical" evidence="1">
    <location>
        <begin position="124"/>
        <end position="140"/>
    </location>
</feature>
<feature type="transmembrane region" description="Helical" evidence="1">
    <location>
        <begin position="152"/>
        <end position="165"/>
    </location>
</feature>
<feature type="transmembrane region" description="Helical" evidence="1">
    <location>
        <begin position="207"/>
        <end position="227"/>
    </location>
</feature>
<feature type="transmembrane region" description="Helical" evidence="1">
    <location>
        <begin position="278"/>
        <end position="294"/>
    </location>
</feature>
<feature type="binding site" description="axial binding residue" evidence="1">
    <location>
        <position position="117"/>
    </location>
    <ligand>
        <name>chlorophyll a</name>
        <dbReference type="ChEBI" id="CHEBI:58416"/>
        <label>ChlzD2</label>
    </ligand>
    <ligandPart>
        <name>Mg</name>
        <dbReference type="ChEBI" id="CHEBI:25107"/>
    </ligandPart>
</feature>
<feature type="binding site" evidence="1">
    <location>
        <position position="129"/>
    </location>
    <ligand>
        <name>pheophytin a</name>
        <dbReference type="ChEBI" id="CHEBI:136840"/>
        <label>D2</label>
    </ligand>
</feature>
<feature type="binding site" evidence="1">
    <location>
        <position position="142"/>
    </location>
    <ligand>
        <name>pheophytin a</name>
        <dbReference type="ChEBI" id="CHEBI:136840"/>
        <label>D2</label>
    </ligand>
</feature>
<feature type="binding site" description="axial binding residue" evidence="1">
    <location>
        <position position="197"/>
    </location>
    <ligand>
        <name>chlorophyll a</name>
        <dbReference type="ChEBI" id="CHEBI:58416"/>
        <label>PD2</label>
    </ligand>
    <ligandPart>
        <name>Mg</name>
        <dbReference type="ChEBI" id="CHEBI:25107"/>
    </ligandPart>
</feature>
<feature type="binding site" evidence="1">
    <location>
        <position position="214"/>
    </location>
    <ligand>
        <name>a plastoquinone</name>
        <dbReference type="ChEBI" id="CHEBI:17757"/>
        <label>Q(A)</label>
    </ligand>
</feature>
<feature type="binding site" evidence="1">
    <location>
        <position position="214"/>
    </location>
    <ligand>
        <name>Fe cation</name>
        <dbReference type="ChEBI" id="CHEBI:24875"/>
        <note>ligand shared with heterodimeric partner</note>
    </ligand>
</feature>
<feature type="binding site" evidence="1">
    <location>
        <position position="261"/>
    </location>
    <ligand>
        <name>a plastoquinone</name>
        <dbReference type="ChEBI" id="CHEBI:17757"/>
        <label>Q(A)</label>
    </ligand>
</feature>
<feature type="binding site" evidence="1">
    <location>
        <position position="268"/>
    </location>
    <ligand>
        <name>Fe cation</name>
        <dbReference type="ChEBI" id="CHEBI:24875"/>
        <note>ligand shared with heterodimeric partner</note>
    </ligand>
</feature>
<protein>
    <recommendedName>
        <fullName evidence="1">Photosystem II D2 protein</fullName>
        <shortName evidence="1">PSII D2 protein</shortName>
        <ecNumber evidence="1">1.10.3.9</ecNumber>
    </recommendedName>
    <alternativeName>
        <fullName evidence="1">Photosystem Q(A) protein</fullName>
    </alternativeName>
</protein>
<evidence type="ECO:0000255" key="1">
    <source>
        <dbReference type="HAMAP-Rule" id="MF_01383"/>
    </source>
</evidence>
<keyword id="KW-0148">Chlorophyll</keyword>
<keyword id="KW-0157">Chromophore</keyword>
<keyword id="KW-0249">Electron transport</keyword>
<keyword id="KW-0408">Iron</keyword>
<keyword id="KW-0460">Magnesium</keyword>
<keyword id="KW-0472">Membrane</keyword>
<keyword id="KW-0479">Metal-binding</keyword>
<keyword id="KW-0560">Oxidoreductase</keyword>
<keyword id="KW-0602">Photosynthesis</keyword>
<keyword id="KW-0604">Photosystem II</keyword>
<keyword id="KW-1185">Reference proteome</keyword>
<keyword id="KW-0793">Thylakoid</keyword>
<keyword id="KW-0812">Transmembrane</keyword>
<keyword id="KW-1133">Transmembrane helix</keyword>
<keyword id="KW-0813">Transport</keyword>
<comment type="function">
    <text evidence="1">Photosystem II (PSII) is a light-driven water:plastoquinone oxidoreductase that uses light energy to abstract electrons from H(2)O, generating O(2) and a proton gradient subsequently used for ATP formation. It consists of a core antenna complex that captures photons, and an electron transfer chain that converts photonic excitation into a charge separation. The D1/D2 (PsbA/PsbD) reaction center heterodimer binds P680, the primary electron donor of PSII as well as several subsequent electron acceptors. D2 is needed for assembly of a stable PSII complex.</text>
</comment>
<comment type="catalytic activity">
    <reaction evidence="1">
        <text>2 a plastoquinone + 4 hnu + 2 H2O = 2 a plastoquinol + O2</text>
        <dbReference type="Rhea" id="RHEA:36359"/>
        <dbReference type="Rhea" id="RHEA-COMP:9561"/>
        <dbReference type="Rhea" id="RHEA-COMP:9562"/>
        <dbReference type="ChEBI" id="CHEBI:15377"/>
        <dbReference type="ChEBI" id="CHEBI:15379"/>
        <dbReference type="ChEBI" id="CHEBI:17757"/>
        <dbReference type="ChEBI" id="CHEBI:30212"/>
        <dbReference type="ChEBI" id="CHEBI:62192"/>
        <dbReference type="EC" id="1.10.3.9"/>
    </reaction>
</comment>
<comment type="cofactor">
    <text evidence="1">The D1/D2 heterodimer binds P680, chlorophylls that are the primary electron donor of PSII, and subsequent electron acceptors. It shares a non-heme iron and each subunit binds pheophytin, quinone, additional chlorophylls, carotenoids and lipids. There is also a Cl(-1) ion associated with D1 and D2, which is required for oxygen evolution. The PSII complex binds additional chlorophylls, carotenoids and specific lipids.</text>
</comment>
<comment type="subunit">
    <text evidence="1">PSII is composed of 1 copy each of membrane proteins PsbA, PsbB, PsbC, PsbD, PsbE, PsbF, PsbH, PsbI, PsbJ, PsbK, PsbL, PsbM, PsbT, PsbX, PsbY, PsbZ, Psb30/Ycf12, peripheral proteins PsbO, CyanoQ (PsbQ), PsbU, PsbV and a large number of cofactors. It forms dimeric complexes.</text>
</comment>
<comment type="subcellular location">
    <subcellularLocation>
        <location evidence="1">Cellular thylakoid membrane</location>
        <topology evidence="1">Multi-pass membrane protein</topology>
    </subcellularLocation>
</comment>
<comment type="miscellaneous">
    <text evidence="1">2 of the reaction center chlorophylls (ChlD1 and ChlD2) are entirely coordinated by water.</text>
</comment>
<comment type="similarity">
    <text evidence="1">Belongs to the reaction center PufL/M/PsbA/D family.</text>
</comment>
<dbReference type="EC" id="1.10.3.9" evidence="1"/>
<dbReference type="EMBL" id="CP000240">
    <property type="protein sequence ID" value="ABD01835.1"/>
    <property type="molecule type" value="Genomic_DNA"/>
</dbReference>
<dbReference type="EMBL" id="CP000240">
    <property type="protein sequence ID" value="ABD02693.1"/>
    <property type="molecule type" value="Genomic_DNA"/>
</dbReference>
<dbReference type="SMR" id="Q2JKT8"/>
<dbReference type="STRING" id="321332.CYB_0854"/>
<dbReference type="KEGG" id="cyb:CYB_0854"/>
<dbReference type="KEGG" id="cyb:CYB_1736"/>
<dbReference type="eggNOG" id="ENOG502Z8JK">
    <property type="taxonomic scope" value="Bacteria"/>
</dbReference>
<dbReference type="HOGENOM" id="CLU_077965_0_0_3"/>
<dbReference type="OrthoDB" id="505356at2"/>
<dbReference type="Proteomes" id="UP000001938">
    <property type="component" value="Chromosome"/>
</dbReference>
<dbReference type="GO" id="GO:0009523">
    <property type="term" value="C:photosystem II"/>
    <property type="evidence" value="ECO:0007669"/>
    <property type="project" value="UniProtKB-KW"/>
</dbReference>
<dbReference type="GO" id="GO:0031676">
    <property type="term" value="C:plasma membrane-derived thylakoid membrane"/>
    <property type="evidence" value="ECO:0007669"/>
    <property type="project" value="UniProtKB-SubCell"/>
</dbReference>
<dbReference type="GO" id="GO:0016168">
    <property type="term" value="F:chlorophyll binding"/>
    <property type="evidence" value="ECO:0007669"/>
    <property type="project" value="UniProtKB-UniRule"/>
</dbReference>
<dbReference type="GO" id="GO:0045156">
    <property type="term" value="F:electron transporter, transferring electrons within the cyclic electron transport pathway of photosynthesis activity"/>
    <property type="evidence" value="ECO:0007669"/>
    <property type="project" value="InterPro"/>
</dbReference>
<dbReference type="GO" id="GO:0005506">
    <property type="term" value="F:iron ion binding"/>
    <property type="evidence" value="ECO:0007669"/>
    <property type="project" value="UniProtKB-UniRule"/>
</dbReference>
<dbReference type="GO" id="GO:0010242">
    <property type="term" value="F:oxygen evolving activity"/>
    <property type="evidence" value="ECO:0007669"/>
    <property type="project" value="UniProtKB-EC"/>
</dbReference>
<dbReference type="GO" id="GO:0009772">
    <property type="term" value="P:photosynthetic electron transport in photosystem II"/>
    <property type="evidence" value="ECO:0007669"/>
    <property type="project" value="InterPro"/>
</dbReference>
<dbReference type="CDD" id="cd09288">
    <property type="entry name" value="Photosystem-II_D2"/>
    <property type="match status" value="1"/>
</dbReference>
<dbReference type="FunFam" id="1.20.85.10:FF:000001">
    <property type="entry name" value="photosystem II D2 protein-like"/>
    <property type="match status" value="1"/>
</dbReference>
<dbReference type="Gene3D" id="1.20.85.10">
    <property type="entry name" value="Photosystem II protein D1-like"/>
    <property type="match status" value="1"/>
</dbReference>
<dbReference type="HAMAP" id="MF_01383">
    <property type="entry name" value="PSII_PsbD_D2"/>
    <property type="match status" value="1"/>
</dbReference>
<dbReference type="InterPro" id="IPR055266">
    <property type="entry name" value="D1/D2"/>
</dbReference>
<dbReference type="InterPro" id="IPR036854">
    <property type="entry name" value="Photo_II_D1/D2_sf"/>
</dbReference>
<dbReference type="InterPro" id="IPR000484">
    <property type="entry name" value="Photo_RC_L/M"/>
</dbReference>
<dbReference type="InterPro" id="IPR055265">
    <property type="entry name" value="Photo_RC_L/M_CS"/>
</dbReference>
<dbReference type="InterPro" id="IPR005868">
    <property type="entry name" value="PSII_PsbD/D2"/>
</dbReference>
<dbReference type="NCBIfam" id="TIGR01152">
    <property type="entry name" value="psbD"/>
    <property type="match status" value="1"/>
</dbReference>
<dbReference type="PANTHER" id="PTHR33149:SF12">
    <property type="entry name" value="PHOTOSYSTEM II D2 PROTEIN"/>
    <property type="match status" value="1"/>
</dbReference>
<dbReference type="PANTHER" id="PTHR33149">
    <property type="entry name" value="PHOTOSYSTEM II PROTEIN D1"/>
    <property type="match status" value="1"/>
</dbReference>
<dbReference type="Pfam" id="PF00124">
    <property type="entry name" value="Photo_RC"/>
    <property type="match status" value="1"/>
</dbReference>
<dbReference type="PRINTS" id="PR00256">
    <property type="entry name" value="REACTNCENTRE"/>
</dbReference>
<dbReference type="SUPFAM" id="SSF81483">
    <property type="entry name" value="Bacterial photosystem II reaction centre, L and M subunits"/>
    <property type="match status" value="1"/>
</dbReference>
<dbReference type="PROSITE" id="PS00244">
    <property type="entry name" value="REACTION_CENTER"/>
    <property type="match status" value="1"/>
</dbReference>